<sequence length="192" mass="21566">MSEKSIVQEARDIQLAMELITLGARLQMLESETQLSRGRLIKLYKELRGSPPPKGMLPFSTDWFMTWEQNVHASMFCNAWQFLLKTGLCNGVDAVIKAYRLYLEQCPQAEEGPLLALTRAWTLVRFVESGLLQLSSCNCCGGNFITHAHQPVGSFACSLCQPPSRAVKRRKLSQNPADIIPQLLDEQRVQAV</sequence>
<protein>
    <recommendedName>
        <fullName>Flagellar transcriptional regulator FlhC</fullName>
    </recommendedName>
</protein>
<evidence type="ECO:0000269" key="1">
    <source>
    </source>
</evidence>
<evidence type="ECO:0000269" key="2">
    <source>
    </source>
</evidence>
<evidence type="ECO:0000269" key="3">
    <source>
    </source>
</evidence>
<evidence type="ECO:0000269" key="4">
    <source>
    </source>
</evidence>
<evidence type="ECO:0000269" key="5">
    <source>
    </source>
</evidence>
<evidence type="ECO:0000269" key="6">
    <source>
    </source>
</evidence>
<evidence type="ECO:0000269" key="7">
    <source>
    </source>
</evidence>
<evidence type="ECO:0000269" key="8">
    <source>
    </source>
</evidence>
<evidence type="ECO:0000305" key="9"/>
<evidence type="ECO:0007829" key="10">
    <source>
        <dbReference type="PDB" id="2AVU"/>
    </source>
</evidence>
<proteinExistence type="evidence at protein level"/>
<feature type="chain" id="PRO_0000064337" description="Flagellar transcriptional regulator FlhC">
    <location>
        <begin position="1"/>
        <end position="192"/>
    </location>
</feature>
<feature type="binding site">
    <location>
        <position position="137"/>
    </location>
    <ligand>
        <name>Zn(2+)</name>
        <dbReference type="ChEBI" id="CHEBI:29105"/>
    </ligand>
</feature>
<feature type="binding site">
    <location>
        <position position="140"/>
    </location>
    <ligand>
        <name>Zn(2+)</name>
        <dbReference type="ChEBI" id="CHEBI:29105"/>
    </ligand>
</feature>
<feature type="binding site">
    <location>
        <position position="157"/>
    </location>
    <ligand>
        <name>Zn(2+)</name>
        <dbReference type="ChEBI" id="CHEBI:29105"/>
    </ligand>
</feature>
<feature type="binding site">
    <location>
        <position position="160"/>
    </location>
    <ligand>
        <name>Zn(2+)</name>
        <dbReference type="ChEBI" id="CHEBI:29105"/>
    </ligand>
</feature>
<feature type="modified residue" description="O-UMP-serine; in inhibited form" evidence="6">
    <location>
        <position position="31"/>
    </location>
</feature>
<feature type="sequence conflict" description="In Ref. 1; AAA23788." evidence="9" ref="1">
    <original>H</original>
    <variation>D</variation>
    <location>
        <position position="149"/>
    </location>
</feature>
<feature type="helix" evidence="10">
    <location>
        <begin position="6"/>
        <end position="21"/>
    </location>
</feature>
<feature type="helix" evidence="10">
    <location>
        <begin position="27"/>
        <end position="32"/>
    </location>
</feature>
<feature type="strand" evidence="10">
    <location>
        <begin position="33"/>
        <end position="35"/>
    </location>
</feature>
<feature type="helix" evidence="10">
    <location>
        <begin position="37"/>
        <end position="47"/>
    </location>
</feature>
<feature type="strand" evidence="10">
    <location>
        <begin position="48"/>
        <end position="50"/>
    </location>
</feature>
<feature type="helix" evidence="10">
    <location>
        <begin position="62"/>
        <end position="65"/>
    </location>
</feature>
<feature type="helix" evidence="10">
    <location>
        <begin position="68"/>
        <end position="85"/>
    </location>
</feature>
<feature type="turn" evidence="10">
    <location>
        <begin position="86"/>
        <end position="88"/>
    </location>
</feature>
<feature type="helix" evidence="10">
    <location>
        <begin position="92"/>
        <end position="105"/>
    </location>
</feature>
<feature type="helix" evidence="10">
    <location>
        <begin position="117"/>
        <end position="128"/>
    </location>
</feature>
<feature type="strand" evidence="10">
    <location>
        <begin position="131"/>
        <end position="136"/>
    </location>
</feature>
<feature type="turn" evidence="10">
    <location>
        <begin position="138"/>
        <end position="140"/>
    </location>
</feature>
<feature type="strand" evidence="10">
    <location>
        <begin position="143"/>
        <end position="149"/>
    </location>
</feature>
<reference key="1">
    <citation type="journal article" date="1988" name="J. Bacteriol.">
        <title>Flagellar transcriptional activators FlbB and FlaI: gene sequences and 5' consensus sequences of operons under FlbB and FlaI control.</title>
        <authorList>
            <person name="Bartlett D.H."/>
            <person name="Frantz B.B."/>
            <person name="Matsumura P."/>
        </authorList>
    </citation>
    <scope>NUCLEOTIDE SEQUENCE [GENOMIC DNA]</scope>
</reference>
<reference key="2">
    <citation type="journal article" date="1996" name="DNA Res.">
        <title>A 460-kb DNA sequence of the Escherichia coli K-12 genome corresponding to the 40.1-50.0 min region on the linkage map.</title>
        <authorList>
            <person name="Itoh T."/>
            <person name="Aiba H."/>
            <person name="Baba T."/>
            <person name="Fujita K."/>
            <person name="Hayashi K."/>
            <person name="Inada T."/>
            <person name="Isono K."/>
            <person name="Kasai H."/>
            <person name="Kimura S."/>
            <person name="Kitakawa M."/>
            <person name="Kitagawa M."/>
            <person name="Makino K."/>
            <person name="Miki T."/>
            <person name="Mizobuchi K."/>
            <person name="Mori H."/>
            <person name="Mori T."/>
            <person name="Motomura K."/>
            <person name="Nakade S."/>
            <person name="Nakamura Y."/>
            <person name="Nashimoto H."/>
            <person name="Nishio Y."/>
            <person name="Oshima T."/>
            <person name="Saito N."/>
            <person name="Sampei G."/>
            <person name="Seki Y."/>
            <person name="Sivasundaram S."/>
            <person name="Tagami H."/>
            <person name="Takeda J."/>
            <person name="Takemoto K."/>
            <person name="Wada C."/>
            <person name="Yamamoto Y."/>
            <person name="Horiuchi T."/>
        </authorList>
    </citation>
    <scope>NUCLEOTIDE SEQUENCE [LARGE SCALE GENOMIC DNA]</scope>
    <source>
        <strain>K12 / W3110 / ATCC 27325 / DSM 5911</strain>
    </source>
</reference>
<reference key="3">
    <citation type="journal article" date="1997" name="Science">
        <title>The complete genome sequence of Escherichia coli K-12.</title>
        <authorList>
            <person name="Blattner F.R."/>
            <person name="Plunkett G. III"/>
            <person name="Bloch C.A."/>
            <person name="Perna N.T."/>
            <person name="Burland V."/>
            <person name="Riley M."/>
            <person name="Collado-Vides J."/>
            <person name="Glasner J.D."/>
            <person name="Rode C.K."/>
            <person name="Mayhew G.F."/>
            <person name="Gregor J."/>
            <person name="Davis N.W."/>
            <person name="Kirkpatrick H.A."/>
            <person name="Goeden M.A."/>
            <person name="Rose D.J."/>
            <person name="Mau B."/>
            <person name="Shao Y."/>
        </authorList>
    </citation>
    <scope>NUCLEOTIDE SEQUENCE [LARGE SCALE GENOMIC DNA]</scope>
    <source>
        <strain>K12 / MG1655 / ATCC 47076</strain>
    </source>
</reference>
<reference key="4">
    <citation type="journal article" date="2006" name="Mol. Syst. Biol.">
        <title>Highly accurate genome sequences of Escherichia coli K-12 strains MG1655 and W3110.</title>
        <authorList>
            <person name="Hayashi K."/>
            <person name="Morooka N."/>
            <person name="Yamamoto Y."/>
            <person name="Fujita K."/>
            <person name="Isono K."/>
            <person name="Choi S."/>
            <person name="Ohtsubo E."/>
            <person name="Baba T."/>
            <person name="Wanner B.L."/>
            <person name="Mori H."/>
            <person name="Horiuchi T."/>
        </authorList>
    </citation>
    <scope>NUCLEOTIDE SEQUENCE [LARGE SCALE GENOMIC DNA]</scope>
    <source>
        <strain>K12 / W3110 / ATCC 27325 / DSM 5911</strain>
    </source>
</reference>
<reference key="5">
    <citation type="journal article" date="1994" name="J. Bacteriol.">
        <title>The FlhD/FlhC complex, a transcriptional activator of the Escherichia coli flagellar class II operons.</title>
        <authorList>
            <person name="Liu X."/>
            <person name="Matsumura P."/>
        </authorList>
    </citation>
    <scope>FUNCTION</scope>
    <scope>INTERACTION WITH FLHD</scope>
    <scope>DNA-BINDING</scope>
    <source>
        <strain>K12 / MC1000 / ATCC 39531</strain>
    </source>
</reference>
<reference key="6">
    <citation type="journal article" date="1995" name="J. Bacteriol.">
        <title>Modulation of flagellar expression in Escherichia coli by acetyl phosphate and the osmoregulator OmpR.</title>
        <authorList>
            <person name="Shin S."/>
            <person name="Park C."/>
        </authorList>
    </citation>
    <scope>INDUCTION</scope>
    <source>
        <strain>K12</strain>
    </source>
</reference>
<reference key="7">
    <citation type="journal article" date="1999" name="J. Bacteriol.">
        <title>Multiple control of flagellum biosynthesis in Escherichia coli: role of H-NS protein and the cyclic AMP-catabolite activator protein complex in transcription of the flhDC master operon.</title>
        <authorList>
            <person name="Soutourina O."/>
            <person name="Kolb A."/>
            <person name="Krin E."/>
            <person name="Laurent-Winter C."/>
            <person name="Rimsky S."/>
            <person name="Danchin A."/>
            <person name="Bertin P."/>
        </authorList>
    </citation>
    <scope>INDUCTION</scope>
    <source>
        <strain>K12 / MG1655 / ATCC 47076</strain>
    </source>
</reference>
<reference key="8">
    <citation type="journal article" date="2001" name="Mol. Microbiol.">
        <title>Extensive alanine scanning reveals protein-protein and protein-DNA interaction surfaces in the global regulator FlhD from Escherichia coli.</title>
        <authorList>
            <person name="Campos A."/>
            <person name="Matsumura P."/>
        </authorList>
    </citation>
    <scope>FUNCTION</scope>
    <scope>INTERACTION WITH FLHD</scope>
    <source>
        <strain>K12 / YK410</strain>
    </source>
</reference>
<reference key="9">
    <citation type="journal article" date="2002" name="Mol. Microbiol.">
        <title>Quorum sensing Escherichia coli regulators B and C (QseBC): a novel two-component regulatory system involved in the regulation of flagella and motility by quorum sensing in E. coli.</title>
        <authorList>
            <person name="Sperandio V."/>
            <person name="Torres A.G."/>
            <person name="Kaper J.B."/>
        </authorList>
    </citation>
    <scope>INDUCTION</scope>
    <source>
        <strain>K12</strain>
    </source>
</reference>
<reference key="10">
    <citation type="journal article" date="2005" name="Microbiology">
        <title>Binding and transcriptional activation of non-flagellar genes by the Escherichia coli flagellar master regulator FlhD2C2.</title>
        <authorList>
            <person name="Stafford G.P."/>
            <person name="Ogi T."/>
            <person name="Hughes C."/>
        </authorList>
    </citation>
    <scope>FUNCTION</scope>
    <scope>DNA-BINDING</scope>
    <source>
        <strain>K12 / MC1000 / ATCC 39531</strain>
    </source>
</reference>
<reference key="11">
    <citation type="journal article" date="2022" name="MBio">
        <title>Switching off Bacterial Flagellar Biogenesis by YdiU-Mediated UMPylation of FlhDC.</title>
        <authorList>
            <person name="Ma Y."/>
            <person name="Yue Y."/>
            <person name="Jia H."/>
            <person name="Song N."/>
            <person name="Zhai L."/>
            <person name="Wang W."/>
            <person name="Li C."/>
            <person name="Li B."/>
        </authorList>
    </citation>
    <scope>ACTIVITY REGULATION</scope>
    <scope>URIDYLYLATION AT SER-31</scope>
</reference>
<reference key="12">
    <citation type="journal article" date="2006" name="J. Mol. Biol.">
        <title>Structure of the Escherichia coli FlhDC complex, a prokaryotic heteromeric regulator of transcription.</title>
        <authorList>
            <person name="Wang S."/>
            <person name="Fleming R.T."/>
            <person name="Westbrook E.M."/>
            <person name="Matsumura P."/>
            <person name="McKay D.B."/>
        </authorList>
    </citation>
    <scope>X-RAY CRYSTALLOGRAPHY (3.0 ANGSTROMS)</scope>
    <scope>SUBUNIT</scope>
    <scope>ZINC-BINDING</scope>
</reference>
<accession>P0ABY7</accession>
<accession>P11165</accession>
<accession>P76303</accession>
<gene>
    <name type="primary">flhC</name>
    <name type="synonym">flaI</name>
    <name type="ordered locus">b1891</name>
    <name type="ordered locus">JW1880</name>
</gene>
<name>FLHC_ECOLI</name>
<organism>
    <name type="scientific">Escherichia coli (strain K12)</name>
    <dbReference type="NCBI Taxonomy" id="83333"/>
    <lineage>
        <taxon>Bacteria</taxon>
        <taxon>Pseudomonadati</taxon>
        <taxon>Pseudomonadota</taxon>
        <taxon>Gammaproteobacteria</taxon>
        <taxon>Enterobacterales</taxon>
        <taxon>Enterobacteriaceae</taxon>
        <taxon>Escherichia</taxon>
    </lineage>
</organism>
<dbReference type="EMBL" id="M19439">
    <property type="protein sequence ID" value="AAA23788.1"/>
    <property type="molecule type" value="Genomic_DNA"/>
</dbReference>
<dbReference type="EMBL" id="U00096">
    <property type="protein sequence ID" value="AAC74961.1"/>
    <property type="molecule type" value="Genomic_DNA"/>
</dbReference>
<dbReference type="EMBL" id="AP009048">
    <property type="protein sequence ID" value="BAA15712.1"/>
    <property type="molecule type" value="Genomic_DNA"/>
</dbReference>
<dbReference type="PIR" id="C64952">
    <property type="entry name" value="XMECIF"/>
</dbReference>
<dbReference type="RefSeq" id="NP_416405.1">
    <property type="nucleotide sequence ID" value="NC_000913.3"/>
</dbReference>
<dbReference type="RefSeq" id="WP_001291603.1">
    <property type="nucleotide sequence ID" value="NZ_STEB01000026.1"/>
</dbReference>
<dbReference type="PDB" id="2AVU">
    <property type="method" value="X-ray"/>
    <property type="resolution" value="3.00 A"/>
    <property type="chains" value="E/F=1-192"/>
</dbReference>
<dbReference type="PDBsum" id="2AVU"/>
<dbReference type="SMR" id="P0ABY7"/>
<dbReference type="BioGRID" id="4262244">
    <property type="interactions" value="93"/>
</dbReference>
<dbReference type="ComplexPortal" id="CPX-2508">
    <property type="entry name" value="FlhDC transcription factor complex"/>
</dbReference>
<dbReference type="DIP" id="DIP-9645N"/>
<dbReference type="FunCoup" id="P0ABY7">
    <property type="interactions" value="238"/>
</dbReference>
<dbReference type="IntAct" id="P0ABY7">
    <property type="interactions" value="1"/>
</dbReference>
<dbReference type="STRING" id="511145.b1891"/>
<dbReference type="PaxDb" id="511145-b1891"/>
<dbReference type="EnsemblBacteria" id="AAC74961">
    <property type="protein sequence ID" value="AAC74961"/>
    <property type="gene ID" value="b1891"/>
</dbReference>
<dbReference type="GeneID" id="93776196"/>
<dbReference type="GeneID" id="947280"/>
<dbReference type="KEGG" id="ecj:JW1880"/>
<dbReference type="KEGG" id="eco:b1891"/>
<dbReference type="KEGG" id="ecoc:C3026_10750"/>
<dbReference type="PATRIC" id="fig|1411691.4.peg.356"/>
<dbReference type="EchoBASE" id="EB0315"/>
<dbReference type="eggNOG" id="ENOG502Z927">
    <property type="taxonomic scope" value="Bacteria"/>
</dbReference>
<dbReference type="HOGENOM" id="CLU_122824_0_0_6"/>
<dbReference type="InParanoid" id="P0ABY7"/>
<dbReference type="OMA" id="MLQLSAC"/>
<dbReference type="OrthoDB" id="5570801at2"/>
<dbReference type="PhylomeDB" id="P0ABY7"/>
<dbReference type="BioCyc" id="EcoCyc:MONOMER0-2488"/>
<dbReference type="EvolutionaryTrace" id="P0ABY7"/>
<dbReference type="PRO" id="PR:P0ABY7"/>
<dbReference type="Proteomes" id="UP000000625">
    <property type="component" value="Chromosome"/>
</dbReference>
<dbReference type="GO" id="GO:0005737">
    <property type="term" value="C:cytoplasm"/>
    <property type="evidence" value="ECO:0007669"/>
    <property type="project" value="UniProtKB-SubCell"/>
</dbReference>
<dbReference type="GO" id="GO:0005667">
    <property type="term" value="C:transcription regulator complex"/>
    <property type="evidence" value="ECO:0000353"/>
    <property type="project" value="ComplexPortal"/>
</dbReference>
<dbReference type="GO" id="GO:0003677">
    <property type="term" value="F:DNA binding"/>
    <property type="evidence" value="ECO:0007669"/>
    <property type="project" value="UniProtKB-UniRule"/>
</dbReference>
<dbReference type="GO" id="GO:0008270">
    <property type="term" value="F:zinc ion binding"/>
    <property type="evidence" value="ECO:0007669"/>
    <property type="project" value="UniProtKB-UniRule"/>
</dbReference>
<dbReference type="GO" id="GO:0044781">
    <property type="term" value="P:bacterial-type flagellum organization"/>
    <property type="evidence" value="ECO:0007669"/>
    <property type="project" value="UniProtKB-KW"/>
</dbReference>
<dbReference type="GO" id="GO:0006351">
    <property type="term" value="P:DNA-templated transcription"/>
    <property type="evidence" value="ECO:0000314"/>
    <property type="project" value="EcoCyc"/>
</dbReference>
<dbReference type="GO" id="GO:1902210">
    <property type="term" value="P:positive regulation of bacterial-type flagellum assembly"/>
    <property type="evidence" value="ECO:0000314"/>
    <property type="project" value="ComplexPortal"/>
</dbReference>
<dbReference type="GO" id="GO:0045893">
    <property type="term" value="P:positive regulation of DNA-templated transcription"/>
    <property type="evidence" value="ECO:0000314"/>
    <property type="project" value="ComplexPortal"/>
</dbReference>
<dbReference type="HAMAP" id="MF_01891">
    <property type="entry name" value="FhlC"/>
    <property type="match status" value="1"/>
</dbReference>
<dbReference type="InterPro" id="IPR007944">
    <property type="entry name" value="FlhC"/>
</dbReference>
<dbReference type="NCBIfam" id="NF009365">
    <property type="entry name" value="PRK12722.1"/>
    <property type="match status" value="1"/>
</dbReference>
<dbReference type="Pfam" id="PF05280">
    <property type="entry name" value="FlhC"/>
    <property type="match status" value="1"/>
</dbReference>
<dbReference type="PIRSF" id="PIRSF003159">
    <property type="entry name" value="FlhC"/>
    <property type="match status" value="1"/>
</dbReference>
<dbReference type="SUPFAM" id="SSF160930">
    <property type="entry name" value="FlhC-like"/>
    <property type="match status" value="1"/>
</dbReference>
<comment type="function">
    <text evidence="2 4 8">Functions in complex with FlhD as a master transcriptional regulator that regulates transcription of several flagellar and non-flagellar operons by binding to their promoter region. Activates expression of class 2 flagellar genes, including fliA, which is a flagellum-specific sigma factor that turns on the class 3 genes. Also regulates genes whose products function in a variety of physiological pathways.</text>
</comment>
<comment type="cofactor">
    <cofactor evidence="9">
        <name>Zn(2+)</name>
        <dbReference type="ChEBI" id="CHEBI:29105"/>
    </cofactor>
    <text evidence="9">Binds 1 zinc ion per subunit.</text>
</comment>
<comment type="activity regulation">
    <text evidence="6">UMPylation of FlhC by SelO/YdiU inhibits its DNA-binding activity, which inhibits the expression of class II and class III flagellar genes, and interrupts flagellar synthesis.</text>
</comment>
<comment type="subunit">
    <text evidence="5">Heterohexamer composed of two FlhC and four FlhD subunits. Each FlhC binds a FlhD dimer, forming a heterotrimer, and a hexamer assembles by dimerization of two heterotrimers.</text>
</comment>
<comment type="subcellular location">
    <subcellularLocation>
        <location evidence="9">Cytoplasm</location>
    </subcellularLocation>
</comment>
<comment type="induction">
    <text evidence="1 3 7">Expression is regulated by a large number of systems, including induction by quorum sensing via the two-component regulatory system QseB/QseC, induction by cAMP-CRP, repression by high osmolarity via OmpR and repression by H-NS.</text>
</comment>
<comment type="PTM">
    <text evidence="6">Can be UMPylated on Ser-31 by SelO/YdiU.</text>
</comment>
<comment type="similarity">
    <text evidence="9">Belongs to the FlhC family.</text>
</comment>
<keyword id="KW-0002">3D-structure</keyword>
<keyword id="KW-0010">Activator</keyword>
<keyword id="KW-1005">Bacterial flagellum biogenesis</keyword>
<keyword id="KW-0963">Cytoplasm</keyword>
<keyword id="KW-0238">DNA-binding</keyword>
<keyword id="KW-0479">Metal-binding</keyword>
<keyword id="KW-0547">Nucleotide-binding</keyword>
<keyword id="KW-0597">Phosphoprotein</keyword>
<keyword id="KW-1185">Reference proteome</keyword>
<keyword id="KW-0804">Transcription</keyword>
<keyword id="KW-0805">Transcription regulation</keyword>
<keyword id="KW-0862">Zinc</keyword>